<feature type="chain" id="PRO_0000072920" description="Glycine--tRNA ligase beta subunit">
    <location>
        <begin position="1"/>
        <end position="684"/>
    </location>
</feature>
<gene>
    <name evidence="1" type="primary">glyS</name>
    <name type="ordered locus">PSPTO_0185</name>
</gene>
<sequence length="684" mass="74773">MSAQDFLVELGTEELPPKTLVSLADAFLAGIEKGLAGAGLTYSAKQVYAAPRRLAVLITALATQQPDRSVNLDGPPRQAAFDADGNPTQAALGFAKKCGVDLSEIDQSGPKLRYSQTILGKPTTSLLPTIVEDSLNDLPIAKRMRWGARKEEFVRPTQWLVMLFGDQVVDCTILAQSAGRHSRGHRFHHPEDVRISSPAGYLSDLRAANVLADFNERRQIISKRVEELASQQEGTAIVPPSLLDEVAGLVEWPVPLVCSFEERFLDVPQEALITTMQDNQKYFCLLDADGKLLPRFITVANIESKDPAQIIAGNEKVVRPRLTDAEFFFKQDKKQKLETFNDRLKNVVFQAQLGSVFDKAERVSKLAAYIAPRIGGDAQRAARAGLLSKCDLSSEMVGEFPEMQGIAGYYYAKADGEAEDVALALNEQYMPRGAGAELPTTLTGAAVAIADKLDTLVGIFGIGMLPTGSKDPYALRRAALGILRILIEKKLDLNLVETVKFAVTQFGAKVKPAGLAEQVLEFIFDRLRARYEDEGVEVAVYLSVRALQPASALDFDQRVQAVQAFRKLPQAAALAAVNKRVSNLLSKAEGSIAQTVEPKYFDNANEFSLYSAIQQADHAVQPMAAERQYSESLARLAMLREPVDAFFEAVMVNAEDANVRANRYALLARLRGLFLGVADISLLG</sequence>
<comment type="catalytic activity">
    <reaction evidence="1">
        <text>tRNA(Gly) + glycine + ATP = glycyl-tRNA(Gly) + AMP + diphosphate</text>
        <dbReference type="Rhea" id="RHEA:16013"/>
        <dbReference type="Rhea" id="RHEA-COMP:9664"/>
        <dbReference type="Rhea" id="RHEA-COMP:9683"/>
        <dbReference type="ChEBI" id="CHEBI:30616"/>
        <dbReference type="ChEBI" id="CHEBI:33019"/>
        <dbReference type="ChEBI" id="CHEBI:57305"/>
        <dbReference type="ChEBI" id="CHEBI:78442"/>
        <dbReference type="ChEBI" id="CHEBI:78522"/>
        <dbReference type="ChEBI" id="CHEBI:456215"/>
        <dbReference type="EC" id="6.1.1.14"/>
    </reaction>
</comment>
<comment type="subunit">
    <text evidence="1">Tetramer of two alpha and two beta subunits.</text>
</comment>
<comment type="subcellular location">
    <subcellularLocation>
        <location evidence="1">Cytoplasm</location>
    </subcellularLocation>
</comment>
<comment type="similarity">
    <text evidence="1">Belongs to the class-II aminoacyl-tRNA synthetase family.</text>
</comment>
<keyword id="KW-0030">Aminoacyl-tRNA synthetase</keyword>
<keyword id="KW-0067">ATP-binding</keyword>
<keyword id="KW-0963">Cytoplasm</keyword>
<keyword id="KW-0436">Ligase</keyword>
<keyword id="KW-0547">Nucleotide-binding</keyword>
<keyword id="KW-0648">Protein biosynthesis</keyword>
<keyword id="KW-1185">Reference proteome</keyword>
<evidence type="ECO:0000255" key="1">
    <source>
        <dbReference type="HAMAP-Rule" id="MF_00255"/>
    </source>
</evidence>
<reference key="1">
    <citation type="journal article" date="2003" name="Proc. Natl. Acad. Sci. U.S.A.">
        <title>The complete genome sequence of the Arabidopsis and tomato pathogen Pseudomonas syringae pv. tomato DC3000.</title>
        <authorList>
            <person name="Buell C.R."/>
            <person name="Joardar V."/>
            <person name="Lindeberg M."/>
            <person name="Selengut J."/>
            <person name="Paulsen I.T."/>
            <person name="Gwinn M.L."/>
            <person name="Dodson R.J."/>
            <person name="DeBoy R.T."/>
            <person name="Durkin A.S."/>
            <person name="Kolonay J.F."/>
            <person name="Madupu R."/>
            <person name="Daugherty S.C."/>
            <person name="Brinkac L.M."/>
            <person name="Beanan M.J."/>
            <person name="Haft D.H."/>
            <person name="Nelson W.C."/>
            <person name="Davidsen T.M."/>
            <person name="Zafar N."/>
            <person name="Zhou L."/>
            <person name="Liu J."/>
            <person name="Yuan Q."/>
            <person name="Khouri H.M."/>
            <person name="Fedorova N.B."/>
            <person name="Tran B."/>
            <person name="Russell D."/>
            <person name="Berry K.J."/>
            <person name="Utterback T.R."/>
            <person name="Van Aken S.E."/>
            <person name="Feldblyum T.V."/>
            <person name="D'Ascenzo M."/>
            <person name="Deng W.-L."/>
            <person name="Ramos A.R."/>
            <person name="Alfano J.R."/>
            <person name="Cartinhour S."/>
            <person name="Chatterjee A.K."/>
            <person name="Delaney T.P."/>
            <person name="Lazarowitz S.G."/>
            <person name="Martin G.B."/>
            <person name="Schneider D.J."/>
            <person name="Tang X."/>
            <person name="Bender C.L."/>
            <person name="White O."/>
            <person name="Fraser C.M."/>
            <person name="Collmer A."/>
        </authorList>
    </citation>
    <scope>NUCLEOTIDE SEQUENCE [LARGE SCALE GENOMIC DNA]</scope>
    <source>
        <strain>ATCC BAA-871 / DC3000</strain>
    </source>
</reference>
<name>SYGB_PSESM</name>
<protein>
    <recommendedName>
        <fullName evidence="1">Glycine--tRNA ligase beta subunit</fullName>
        <ecNumber evidence="1">6.1.1.14</ecNumber>
    </recommendedName>
    <alternativeName>
        <fullName evidence="1">Glycyl-tRNA synthetase beta subunit</fullName>
        <shortName evidence="1">GlyRS</shortName>
    </alternativeName>
</protein>
<organism>
    <name type="scientific">Pseudomonas syringae pv. tomato (strain ATCC BAA-871 / DC3000)</name>
    <dbReference type="NCBI Taxonomy" id="223283"/>
    <lineage>
        <taxon>Bacteria</taxon>
        <taxon>Pseudomonadati</taxon>
        <taxon>Pseudomonadota</taxon>
        <taxon>Gammaproteobacteria</taxon>
        <taxon>Pseudomonadales</taxon>
        <taxon>Pseudomonadaceae</taxon>
        <taxon>Pseudomonas</taxon>
    </lineage>
</organism>
<accession>Q88B35</accession>
<dbReference type="EC" id="6.1.1.14" evidence="1"/>
<dbReference type="EMBL" id="AE016853">
    <property type="protein sequence ID" value="AAO53739.1"/>
    <property type="molecule type" value="Genomic_DNA"/>
</dbReference>
<dbReference type="RefSeq" id="NP_790044.1">
    <property type="nucleotide sequence ID" value="NC_004578.1"/>
</dbReference>
<dbReference type="RefSeq" id="WP_011103028.1">
    <property type="nucleotide sequence ID" value="NC_004578.1"/>
</dbReference>
<dbReference type="SMR" id="Q88B35"/>
<dbReference type="STRING" id="223283.PSPTO_0185"/>
<dbReference type="GeneID" id="1181793"/>
<dbReference type="KEGG" id="pst:PSPTO_0185"/>
<dbReference type="PATRIC" id="fig|223283.9.peg.191"/>
<dbReference type="eggNOG" id="COG0751">
    <property type="taxonomic scope" value="Bacteria"/>
</dbReference>
<dbReference type="HOGENOM" id="CLU_007220_2_2_6"/>
<dbReference type="OrthoDB" id="9775440at2"/>
<dbReference type="PhylomeDB" id="Q88B35"/>
<dbReference type="Proteomes" id="UP000002515">
    <property type="component" value="Chromosome"/>
</dbReference>
<dbReference type="GO" id="GO:0005829">
    <property type="term" value="C:cytosol"/>
    <property type="evidence" value="ECO:0007669"/>
    <property type="project" value="TreeGrafter"/>
</dbReference>
<dbReference type="GO" id="GO:0004814">
    <property type="term" value="F:arginine-tRNA ligase activity"/>
    <property type="evidence" value="ECO:0007669"/>
    <property type="project" value="InterPro"/>
</dbReference>
<dbReference type="GO" id="GO:0005524">
    <property type="term" value="F:ATP binding"/>
    <property type="evidence" value="ECO:0007669"/>
    <property type="project" value="UniProtKB-UniRule"/>
</dbReference>
<dbReference type="GO" id="GO:0004820">
    <property type="term" value="F:glycine-tRNA ligase activity"/>
    <property type="evidence" value="ECO:0007669"/>
    <property type="project" value="UniProtKB-UniRule"/>
</dbReference>
<dbReference type="GO" id="GO:0006420">
    <property type="term" value="P:arginyl-tRNA aminoacylation"/>
    <property type="evidence" value="ECO:0007669"/>
    <property type="project" value="InterPro"/>
</dbReference>
<dbReference type="GO" id="GO:0006426">
    <property type="term" value="P:glycyl-tRNA aminoacylation"/>
    <property type="evidence" value="ECO:0007669"/>
    <property type="project" value="UniProtKB-UniRule"/>
</dbReference>
<dbReference type="HAMAP" id="MF_00255">
    <property type="entry name" value="Gly_tRNA_synth_beta"/>
    <property type="match status" value="1"/>
</dbReference>
<dbReference type="InterPro" id="IPR008909">
    <property type="entry name" value="DALR_anticod-bd"/>
</dbReference>
<dbReference type="InterPro" id="IPR015944">
    <property type="entry name" value="Gly-tRNA-synth_bsu"/>
</dbReference>
<dbReference type="InterPro" id="IPR006194">
    <property type="entry name" value="Gly-tRNA-synth_heterodimer"/>
</dbReference>
<dbReference type="NCBIfam" id="TIGR00211">
    <property type="entry name" value="glyS"/>
    <property type="match status" value="1"/>
</dbReference>
<dbReference type="PANTHER" id="PTHR30075:SF2">
    <property type="entry name" value="GLYCINE--TRNA LIGASE, CHLOROPLASTIC_MITOCHONDRIAL 2"/>
    <property type="match status" value="1"/>
</dbReference>
<dbReference type="PANTHER" id="PTHR30075">
    <property type="entry name" value="GLYCYL-TRNA SYNTHETASE"/>
    <property type="match status" value="1"/>
</dbReference>
<dbReference type="Pfam" id="PF05746">
    <property type="entry name" value="DALR_1"/>
    <property type="match status" value="1"/>
</dbReference>
<dbReference type="Pfam" id="PF02092">
    <property type="entry name" value="tRNA_synt_2f"/>
    <property type="match status" value="1"/>
</dbReference>
<dbReference type="PRINTS" id="PR01045">
    <property type="entry name" value="TRNASYNTHGB"/>
</dbReference>
<dbReference type="SUPFAM" id="SSF109604">
    <property type="entry name" value="HD-domain/PDEase-like"/>
    <property type="match status" value="1"/>
</dbReference>
<dbReference type="PROSITE" id="PS50861">
    <property type="entry name" value="AA_TRNA_LIGASE_II_GLYAB"/>
    <property type="match status" value="1"/>
</dbReference>
<proteinExistence type="inferred from homology"/>